<evidence type="ECO:0000250" key="1"/>
<evidence type="ECO:0000250" key="2">
    <source>
        <dbReference type="UniProtKB" id="Q96DZ5"/>
    </source>
</evidence>
<evidence type="ECO:0000255" key="3">
    <source>
        <dbReference type="PROSITE-ProRule" id="PRU00045"/>
    </source>
</evidence>
<evidence type="ECO:0000256" key="4">
    <source>
        <dbReference type="SAM" id="MobiDB-lite"/>
    </source>
</evidence>
<evidence type="ECO:0000269" key="5">
    <source>
    </source>
</evidence>
<evidence type="ECO:0000305" key="6"/>
<evidence type="ECO:0007744" key="7">
    <source>
    </source>
</evidence>
<evidence type="ECO:0007829" key="8">
    <source>
        <dbReference type="PDB" id="1WHH"/>
    </source>
</evidence>
<keyword id="KW-0002">3D-structure</keyword>
<keyword id="KW-0040">ANK repeat</keyword>
<keyword id="KW-1003">Cell membrane</keyword>
<keyword id="KW-0963">Cytoplasm</keyword>
<keyword id="KW-0333">Golgi apparatus</keyword>
<keyword id="KW-0449">Lipoprotein</keyword>
<keyword id="KW-0472">Membrane</keyword>
<keyword id="KW-0564">Palmitate</keyword>
<keyword id="KW-0597">Phosphoprotein</keyword>
<keyword id="KW-1185">Reference proteome</keyword>
<keyword id="KW-0677">Repeat</keyword>
<proteinExistence type="evidence at protein level"/>
<gene>
    <name type="primary">Clip3</name>
    <name type="synonym">Clipr59</name>
</gene>
<organism>
    <name type="scientific">Mus musculus</name>
    <name type="common">Mouse</name>
    <dbReference type="NCBI Taxonomy" id="10090"/>
    <lineage>
        <taxon>Eukaryota</taxon>
        <taxon>Metazoa</taxon>
        <taxon>Chordata</taxon>
        <taxon>Craniata</taxon>
        <taxon>Vertebrata</taxon>
        <taxon>Euteleostomi</taxon>
        <taxon>Mammalia</taxon>
        <taxon>Eutheria</taxon>
        <taxon>Euarchontoglires</taxon>
        <taxon>Glires</taxon>
        <taxon>Rodentia</taxon>
        <taxon>Myomorpha</taxon>
        <taxon>Muroidea</taxon>
        <taxon>Muridae</taxon>
        <taxon>Murinae</taxon>
        <taxon>Mus</taxon>
        <taxon>Mus</taxon>
    </lineage>
</organism>
<comment type="function">
    <text evidence="1">Functions as a cytoplasmic linker protein. Involved in TGN-endosome dynamics. May modulate the cellular compartmentalization of AKT kinase family and promote its cell membrane localization, thereby playing a role in glucose transport in adipocytes (By similarity).</text>
</comment>
<comment type="subunit">
    <text evidence="2 5">Homodimer. Interacts with AKT1 and AKT2; when AKT1 and AKT2 are phosphorylated and activated, affinity is higher for AKT2 (By similarity). Interacts with ZDHHC13 (via ANK repeats) (PubMed:26198635). Interacts with ZDHHC17 (via ANK repeats) (PubMed:26198635).</text>
</comment>
<comment type="subcellular location">
    <subcellularLocation>
        <location evidence="1">Cell membrane</location>
        <topology evidence="1">Lipid-anchor</topology>
    </subcellularLocation>
    <subcellularLocation>
        <location evidence="1">Cytoplasm</location>
    </subcellularLocation>
    <subcellularLocation>
        <location evidence="1">Golgi apparatus</location>
        <location evidence="1">Golgi stack</location>
    </subcellularLocation>
    <text evidence="1">Localized to Golgi stacks as well as on tubulovesicular elements juxtaposed to Golgi cisternae.</text>
</comment>
<comment type="domain">
    <text evidence="1">Microtubule association is inhibited by the ANK repeats and the Golgi localization region (GoLD).</text>
</comment>
<comment type="PTM">
    <text evidence="1">Palmitoylation by ZDHHC17 regulates association with the plasma membrane.</text>
</comment>
<comment type="miscellaneous">
    <text evidence="1">The N-terminal half is dispensable for proper Golgi targeting, whereas the GoLD region is required.</text>
</comment>
<comment type="sequence caution" evidence="6">
    <conflict type="erroneous initiation">
        <sequence resource="EMBL-CDS" id="BAB23857"/>
    </conflict>
    <text>Truncated N-terminus.</text>
</comment>
<dbReference type="EMBL" id="AC149067">
    <property type="status" value="NOT_ANNOTATED_CDS"/>
    <property type="molecule type" value="Genomic_DNA"/>
</dbReference>
<dbReference type="EMBL" id="CH466593">
    <property type="protein sequence ID" value="EDL24034.1"/>
    <property type="molecule type" value="Genomic_DNA"/>
</dbReference>
<dbReference type="EMBL" id="BC056173">
    <property type="protein sequence ID" value="AAH56173.1"/>
    <property type="molecule type" value="mRNA"/>
</dbReference>
<dbReference type="EMBL" id="BC138413">
    <property type="protein sequence ID" value="AAI38414.1"/>
    <property type="molecule type" value="mRNA"/>
</dbReference>
<dbReference type="EMBL" id="AK005167">
    <property type="protein sequence ID" value="BAB23857.1"/>
    <property type="status" value="ALT_INIT"/>
    <property type="molecule type" value="mRNA"/>
</dbReference>
<dbReference type="CCDS" id="CCDS39880.1"/>
<dbReference type="RefSeq" id="NP_001074583.1">
    <property type="nucleotide sequence ID" value="NM_001081114.2"/>
</dbReference>
<dbReference type="RefSeq" id="NP_001347692.1">
    <property type="nucleotide sequence ID" value="NM_001360763.1"/>
</dbReference>
<dbReference type="RefSeq" id="NP_001347693.1">
    <property type="nucleotide sequence ID" value="NM_001360764.1"/>
</dbReference>
<dbReference type="RefSeq" id="XP_006540473.1">
    <property type="nucleotide sequence ID" value="XM_006540410.3"/>
</dbReference>
<dbReference type="RefSeq" id="XP_006540474.1">
    <property type="nucleotide sequence ID" value="XM_006540411.3"/>
</dbReference>
<dbReference type="PDB" id="1WHH">
    <property type="method" value="NMR"/>
    <property type="chains" value="A=398-486"/>
</dbReference>
<dbReference type="PDBsum" id="1WHH"/>
<dbReference type="SMR" id="B9EHT4"/>
<dbReference type="BioGRID" id="218260">
    <property type="interactions" value="3"/>
</dbReference>
<dbReference type="FunCoup" id="B9EHT4">
    <property type="interactions" value="580"/>
</dbReference>
<dbReference type="STRING" id="10090.ENSMUSP00000014065"/>
<dbReference type="GlyGen" id="B9EHT4">
    <property type="glycosylation" value="1 site"/>
</dbReference>
<dbReference type="iPTMnet" id="B9EHT4"/>
<dbReference type="PhosphoSitePlus" id="B9EHT4"/>
<dbReference type="SwissPalm" id="B9EHT4"/>
<dbReference type="PaxDb" id="10090-ENSMUSP00000014065"/>
<dbReference type="PeptideAtlas" id="B9EHT4"/>
<dbReference type="ProteomicsDB" id="283302"/>
<dbReference type="Pumba" id="B9EHT4"/>
<dbReference type="Antibodypedia" id="48030">
    <property type="antibodies" value="133 antibodies from 24 providers"/>
</dbReference>
<dbReference type="Ensembl" id="ENSMUST00000014065.16">
    <property type="protein sequence ID" value="ENSMUSP00000014065.9"/>
    <property type="gene ID" value="ENSMUSG00000013921.16"/>
</dbReference>
<dbReference type="GeneID" id="76686"/>
<dbReference type="KEGG" id="mmu:76686"/>
<dbReference type="UCSC" id="uc009gea.1">
    <property type="organism name" value="mouse"/>
</dbReference>
<dbReference type="AGR" id="MGI:1923936"/>
<dbReference type="CTD" id="25999"/>
<dbReference type="MGI" id="MGI:1923936">
    <property type="gene designation" value="Clip3"/>
</dbReference>
<dbReference type="VEuPathDB" id="HostDB:ENSMUSG00000013921"/>
<dbReference type="eggNOG" id="KOG4568">
    <property type="taxonomic scope" value="Eukaryota"/>
</dbReference>
<dbReference type="GeneTree" id="ENSGT00940000159557"/>
<dbReference type="HOGENOM" id="CLU_023687_2_1_1"/>
<dbReference type="InParanoid" id="B9EHT4"/>
<dbReference type="OMA" id="KAESAMI"/>
<dbReference type="OrthoDB" id="2130750at2759"/>
<dbReference type="PhylomeDB" id="B9EHT4"/>
<dbReference type="TreeFam" id="TF326096"/>
<dbReference type="Reactome" id="R-MMU-5357905">
    <property type="pathway name" value="Regulation of TNFR1 signaling"/>
</dbReference>
<dbReference type="BioGRID-ORCS" id="76686">
    <property type="hits" value="1 hit in 76 CRISPR screens"/>
</dbReference>
<dbReference type="CD-CODE" id="CE726F99">
    <property type="entry name" value="Postsynaptic density"/>
</dbReference>
<dbReference type="ChiTaRS" id="Clip3">
    <property type="organism name" value="mouse"/>
</dbReference>
<dbReference type="EvolutionaryTrace" id="B9EHT4"/>
<dbReference type="PRO" id="PR:B9EHT4"/>
<dbReference type="Proteomes" id="UP000000589">
    <property type="component" value="Chromosome 7"/>
</dbReference>
<dbReference type="RNAct" id="B9EHT4">
    <property type="molecule type" value="protein"/>
</dbReference>
<dbReference type="Bgee" id="ENSMUSG00000013921">
    <property type="expression patterns" value="Expressed in embryonic brain and 221 other cell types or tissues"/>
</dbReference>
<dbReference type="ExpressionAtlas" id="B9EHT4">
    <property type="expression patterns" value="baseline and differential"/>
</dbReference>
<dbReference type="GO" id="GO:0031901">
    <property type="term" value="C:early endosome membrane"/>
    <property type="evidence" value="ECO:0000250"/>
    <property type="project" value="UniProtKB"/>
</dbReference>
<dbReference type="GO" id="GO:0005795">
    <property type="term" value="C:Golgi stack"/>
    <property type="evidence" value="ECO:0007669"/>
    <property type="project" value="UniProtKB-SubCell"/>
</dbReference>
<dbReference type="GO" id="GO:0045121">
    <property type="term" value="C:membrane raft"/>
    <property type="evidence" value="ECO:0000250"/>
    <property type="project" value="UniProtKB"/>
</dbReference>
<dbReference type="GO" id="GO:0005886">
    <property type="term" value="C:plasma membrane"/>
    <property type="evidence" value="ECO:0000314"/>
    <property type="project" value="UniProtKB"/>
</dbReference>
<dbReference type="GO" id="GO:0055038">
    <property type="term" value="C:recycling endosome membrane"/>
    <property type="evidence" value="ECO:0000250"/>
    <property type="project" value="UniProtKB"/>
</dbReference>
<dbReference type="GO" id="GO:0005802">
    <property type="term" value="C:trans-Golgi network"/>
    <property type="evidence" value="ECO:0000314"/>
    <property type="project" value="UniProtKB"/>
</dbReference>
<dbReference type="GO" id="GO:0032588">
    <property type="term" value="C:trans-Golgi network membrane"/>
    <property type="evidence" value="ECO:0000250"/>
    <property type="project" value="UniProtKB"/>
</dbReference>
<dbReference type="GO" id="GO:0035594">
    <property type="term" value="F:ganglioside binding"/>
    <property type="evidence" value="ECO:0000250"/>
    <property type="project" value="UniProtKB"/>
</dbReference>
<dbReference type="GO" id="GO:0008017">
    <property type="term" value="F:microtubule binding"/>
    <property type="evidence" value="ECO:0000250"/>
    <property type="project" value="UniProtKB"/>
</dbReference>
<dbReference type="GO" id="GO:0045444">
    <property type="term" value="P:fat cell differentiation"/>
    <property type="evidence" value="ECO:0000270"/>
    <property type="project" value="UniProtKB"/>
</dbReference>
<dbReference type="GO" id="GO:0044091">
    <property type="term" value="P:membrane biogenesis"/>
    <property type="evidence" value="ECO:0000250"/>
    <property type="project" value="UniProtKB"/>
</dbReference>
<dbReference type="GO" id="GO:0031115">
    <property type="term" value="P:negative regulation of microtubule polymerization"/>
    <property type="evidence" value="ECO:0000250"/>
    <property type="project" value="UniProtKB"/>
</dbReference>
<dbReference type="GO" id="GO:0018230">
    <property type="term" value="P:peptidyl-L-cysteine S-palmitoylation"/>
    <property type="evidence" value="ECO:0000250"/>
    <property type="project" value="UniProtKB"/>
</dbReference>
<dbReference type="GO" id="GO:0043065">
    <property type="term" value="P:positive regulation of apoptotic process"/>
    <property type="evidence" value="ECO:0000250"/>
    <property type="project" value="UniProtKB"/>
</dbReference>
<dbReference type="GO" id="GO:0010828">
    <property type="term" value="P:positive regulation of D-glucose transmembrane transport"/>
    <property type="evidence" value="ECO:0000315"/>
    <property type="project" value="UniProtKB"/>
</dbReference>
<dbReference type="GO" id="GO:0045807">
    <property type="term" value="P:positive regulation of endocytosis"/>
    <property type="evidence" value="ECO:0000250"/>
    <property type="project" value="UniProtKB"/>
</dbReference>
<dbReference type="GO" id="GO:1903078">
    <property type="term" value="P:positive regulation of protein localization to plasma membrane"/>
    <property type="evidence" value="ECO:0000314"/>
    <property type="project" value="UniProtKB"/>
</dbReference>
<dbReference type="GO" id="GO:0001934">
    <property type="term" value="P:positive regulation of protein phosphorylation"/>
    <property type="evidence" value="ECO:0000314"/>
    <property type="project" value="UniProtKB"/>
</dbReference>
<dbReference type="GO" id="GO:0098840">
    <property type="term" value="P:protein transport along microtubule"/>
    <property type="evidence" value="ECO:0000250"/>
    <property type="project" value="UniProtKB"/>
</dbReference>
<dbReference type="FunFam" id="1.25.40.20:FF:000044">
    <property type="entry name" value="CAP-Gly domain containing linker protein 3"/>
    <property type="match status" value="1"/>
</dbReference>
<dbReference type="FunFam" id="2.30.30.190:FF:000005">
    <property type="entry name" value="CAP-Gly domain containing linker protein 3"/>
    <property type="match status" value="1"/>
</dbReference>
<dbReference type="Gene3D" id="1.25.40.20">
    <property type="entry name" value="Ankyrin repeat-containing domain"/>
    <property type="match status" value="1"/>
</dbReference>
<dbReference type="Gene3D" id="2.30.30.190">
    <property type="entry name" value="CAP Gly-rich-like domain"/>
    <property type="match status" value="2"/>
</dbReference>
<dbReference type="InterPro" id="IPR002110">
    <property type="entry name" value="Ankyrin_rpt"/>
</dbReference>
<dbReference type="InterPro" id="IPR036770">
    <property type="entry name" value="Ankyrin_rpt-contain_sf"/>
</dbReference>
<dbReference type="InterPro" id="IPR036859">
    <property type="entry name" value="CAP-Gly_dom_sf"/>
</dbReference>
<dbReference type="InterPro" id="IPR000938">
    <property type="entry name" value="CAP-Gly_domain"/>
</dbReference>
<dbReference type="PANTHER" id="PTHR18916:SF77">
    <property type="entry name" value="CAP-GLY DOMAIN-CONTAINING LINKER PROTEIN 3"/>
    <property type="match status" value="1"/>
</dbReference>
<dbReference type="PANTHER" id="PTHR18916">
    <property type="entry name" value="DYNACTIN 1-RELATED MICROTUBULE-BINDING"/>
    <property type="match status" value="1"/>
</dbReference>
<dbReference type="Pfam" id="PF12796">
    <property type="entry name" value="Ank_2"/>
    <property type="match status" value="1"/>
</dbReference>
<dbReference type="Pfam" id="PF01302">
    <property type="entry name" value="CAP_GLY"/>
    <property type="match status" value="2"/>
</dbReference>
<dbReference type="SMART" id="SM00248">
    <property type="entry name" value="ANK"/>
    <property type="match status" value="3"/>
</dbReference>
<dbReference type="SMART" id="SM01052">
    <property type="entry name" value="CAP_GLY"/>
    <property type="match status" value="2"/>
</dbReference>
<dbReference type="SUPFAM" id="SSF48403">
    <property type="entry name" value="Ankyrin repeat"/>
    <property type="match status" value="1"/>
</dbReference>
<dbReference type="SUPFAM" id="SSF74924">
    <property type="entry name" value="Cap-Gly domain"/>
    <property type="match status" value="2"/>
</dbReference>
<dbReference type="PROSITE" id="PS50297">
    <property type="entry name" value="ANK_REP_REGION"/>
    <property type="match status" value="1"/>
</dbReference>
<dbReference type="PROSITE" id="PS50088">
    <property type="entry name" value="ANK_REPEAT"/>
    <property type="match status" value="1"/>
</dbReference>
<dbReference type="PROSITE" id="PS00845">
    <property type="entry name" value="CAP_GLY_1"/>
    <property type="match status" value="2"/>
</dbReference>
<dbReference type="PROSITE" id="PS50245">
    <property type="entry name" value="CAP_GLY_2"/>
    <property type="match status" value="2"/>
</dbReference>
<reference key="1">
    <citation type="journal article" date="2009" name="PLoS Biol.">
        <title>Lineage-specific biology revealed by a finished genome assembly of the mouse.</title>
        <authorList>
            <person name="Church D.M."/>
            <person name="Goodstadt L."/>
            <person name="Hillier L.W."/>
            <person name="Zody M.C."/>
            <person name="Goldstein S."/>
            <person name="She X."/>
            <person name="Bult C.J."/>
            <person name="Agarwala R."/>
            <person name="Cherry J.L."/>
            <person name="DiCuccio M."/>
            <person name="Hlavina W."/>
            <person name="Kapustin Y."/>
            <person name="Meric P."/>
            <person name="Maglott D."/>
            <person name="Birtle Z."/>
            <person name="Marques A.C."/>
            <person name="Graves T."/>
            <person name="Zhou S."/>
            <person name="Teague B."/>
            <person name="Potamousis K."/>
            <person name="Churas C."/>
            <person name="Place M."/>
            <person name="Herschleb J."/>
            <person name="Runnheim R."/>
            <person name="Forrest D."/>
            <person name="Amos-Landgraf J."/>
            <person name="Schwartz D.C."/>
            <person name="Cheng Z."/>
            <person name="Lindblad-Toh K."/>
            <person name="Eichler E.E."/>
            <person name="Ponting C.P."/>
        </authorList>
    </citation>
    <scope>NUCLEOTIDE SEQUENCE [LARGE SCALE GENOMIC DNA]</scope>
    <source>
        <strain>C57BL/6J</strain>
    </source>
</reference>
<reference key="2">
    <citation type="submission" date="2005-09" db="EMBL/GenBank/DDBJ databases">
        <authorList>
            <person name="Mural R.J."/>
            <person name="Adams M.D."/>
            <person name="Myers E.W."/>
            <person name="Smith H.O."/>
            <person name="Venter J.C."/>
        </authorList>
    </citation>
    <scope>NUCLEOTIDE SEQUENCE [LARGE SCALE GENOMIC DNA]</scope>
</reference>
<reference key="3">
    <citation type="journal article" date="2004" name="Genome Res.">
        <title>The status, quality, and expansion of the NIH full-length cDNA project: the Mammalian Gene Collection (MGC).</title>
        <authorList>
            <consortium name="The MGC Project Team"/>
        </authorList>
    </citation>
    <scope>NUCLEOTIDE SEQUENCE [LARGE SCALE MRNA]</scope>
    <source>
        <strain>C57BL/6J</strain>
        <tissue>Brain</tissue>
    </source>
</reference>
<reference key="4">
    <citation type="journal article" date="2005" name="Science">
        <title>The transcriptional landscape of the mammalian genome.</title>
        <authorList>
            <person name="Carninci P."/>
            <person name="Kasukawa T."/>
            <person name="Katayama S."/>
            <person name="Gough J."/>
            <person name="Frith M.C."/>
            <person name="Maeda N."/>
            <person name="Oyama R."/>
            <person name="Ravasi T."/>
            <person name="Lenhard B."/>
            <person name="Wells C."/>
            <person name="Kodzius R."/>
            <person name="Shimokawa K."/>
            <person name="Bajic V.B."/>
            <person name="Brenner S.E."/>
            <person name="Batalov S."/>
            <person name="Forrest A.R."/>
            <person name="Zavolan M."/>
            <person name="Davis M.J."/>
            <person name="Wilming L.G."/>
            <person name="Aidinis V."/>
            <person name="Allen J.E."/>
            <person name="Ambesi-Impiombato A."/>
            <person name="Apweiler R."/>
            <person name="Aturaliya R.N."/>
            <person name="Bailey T.L."/>
            <person name="Bansal M."/>
            <person name="Baxter L."/>
            <person name="Beisel K.W."/>
            <person name="Bersano T."/>
            <person name="Bono H."/>
            <person name="Chalk A.M."/>
            <person name="Chiu K.P."/>
            <person name="Choudhary V."/>
            <person name="Christoffels A."/>
            <person name="Clutterbuck D.R."/>
            <person name="Crowe M.L."/>
            <person name="Dalla E."/>
            <person name="Dalrymple B.P."/>
            <person name="de Bono B."/>
            <person name="Della Gatta G."/>
            <person name="di Bernardo D."/>
            <person name="Down T."/>
            <person name="Engstrom P."/>
            <person name="Fagiolini M."/>
            <person name="Faulkner G."/>
            <person name="Fletcher C.F."/>
            <person name="Fukushima T."/>
            <person name="Furuno M."/>
            <person name="Futaki S."/>
            <person name="Gariboldi M."/>
            <person name="Georgii-Hemming P."/>
            <person name="Gingeras T.R."/>
            <person name="Gojobori T."/>
            <person name="Green R.E."/>
            <person name="Gustincich S."/>
            <person name="Harbers M."/>
            <person name="Hayashi Y."/>
            <person name="Hensch T.K."/>
            <person name="Hirokawa N."/>
            <person name="Hill D."/>
            <person name="Huminiecki L."/>
            <person name="Iacono M."/>
            <person name="Ikeo K."/>
            <person name="Iwama A."/>
            <person name="Ishikawa T."/>
            <person name="Jakt M."/>
            <person name="Kanapin A."/>
            <person name="Katoh M."/>
            <person name="Kawasawa Y."/>
            <person name="Kelso J."/>
            <person name="Kitamura H."/>
            <person name="Kitano H."/>
            <person name="Kollias G."/>
            <person name="Krishnan S.P."/>
            <person name="Kruger A."/>
            <person name="Kummerfeld S.K."/>
            <person name="Kurochkin I.V."/>
            <person name="Lareau L.F."/>
            <person name="Lazarevic D."/>
            <person name="Lipovich L."/>
            <person name="Liu J."/>
            <person name="Liuni S."/>
            <person name="McWilliam S."/>
            <person name="Madan Babu M."/>
            <person name="Madera M."/>
            <person name="Marchionni L."/>
            <person name="Matsuda H."/>
            <person name="Matsuzawa S."/>
            <person name="Miki H."/>
            <person name="Mignone F."/>
            <person name="Miyake S."/>
            <person name="Morris K."/>
            <person name="Mottagui-Tabar S."/>
            <person name="Mulder N."/>
            <person name="Nakano N."/>
            <person name="Nakauchi H."/>
            <person name="Ng P."/>
            <person name="Nilsson R."/>
            <person name="Nishiguchi S."/>
            <person name="Nishikawa S."/>
            <person name="Nori F."/>
            <person name="Ohara O."/>
            <person name="Okazaki Y."/>
            <person name="Orlando V."/>
            <person name="Pang K.C."/>
            <person name="Pavan W.J."/>
            <person name="Pavesi G."/>
            <person name="Pesole G."/>
            <person name="Petrovsky N."/>
            <person name="Piazza S."/>
            <person name="Reed J."/>
            <person name="Reid J.F."/>
            <person name="Ring B.Z."/>
            <person name="Ringwald M."/>
            <person name="Rost B."/>
            <person name="Ruan Y."/>
            <person name="Salzberg S.L."/>
            <person name="Sandelin A."/>
            <person name="Schneider C."/>
            <person name="Schoenbach C."/>
            <person name="Sekiguchi K."/>
            <person name="Semple C.A."/>
            <person name="Seno S."/>
            <person name="Sessa L."/>
            <person name="Sheng Y."/>
            <person name="Shibata Y."/>
            <person name="Shimada H."/>
            <person name="Shimada K."/>
            <person name="Silva D."/>
            <person name="Sinclair B."/>
            <person name="Sperling S."/>
            <person name="Stupka E."/>
            <person name="Sugiura K."/>
            <person name="Sultana R."/>
            <person name="Takenaka Y."/>
            <person name="Taki K."/>
            <person name="Tammoja K."/>
            <person name="Tan S.L."/>
            <person name="Tang S."/>
            <person name="Taylor M.S."/>
            <person name="Tegner J."/>
            <person name="Teichmann S.A."/>
            <person name="Ueda H.R."/>
            <person name="van Nimwegen E."/>
            <person name="Verardo R."/>
            <person name="Wei C.L."/>
            <person name="Yagi K."/>
            <person name="Yamanishi H."/>
            <person name="Zabarovsky E."/>
            <person name="Zhu S."/>
            <person name="Zimmer A."/>
            <person name="Hide W."/>
            <person name="Bult C."/>
            <person name="Grimmond S.M."/>
            <person name="Teasdale R.D."/>
            <person name="Liu E.T."/>
            <person name="Brusic V."/>
            <person name="Quackenbush J."/>
            <person name="Wahlestedt C."/>
            <person name="Mattick J.S."/>
            <person name="Hume D.A."/>
            <person name="Kai C."/>
            <person name="Sasaki D."/>
            <person name="Tomaru Y."/>
            <person name="Fukuda S."/>
            <person name="Kanamori-Katayama M."/>
            <person name="Suzuki M."/>
            <person name="Aoki J."/>
            <person name="Arakawa T."/>
            <person name="Iida J."/>
            <person name="Imamura K."/>
            <person name="Itoh M."/>
            <person name="Kato T."/>
            <person name="Kawaji H."/>
            <person name="Kawagashira N."/>
            <person name="Kawashima T."/>
            <person name="Kojima M."/>
            <person name="Kondo S."/>
            <person name="Konno H."/>
            <person name="Nakano K."/>
            <person name="Ninomiya N."/>
            <person name="Nishio T."/>
            <person name="Okada M."/>
            <person name="Plessy C."/>
            <person name="Shibata K."/>
            <person name="Shiraki T."/>
            <person name="Suzuki S."/>
            <person name="Tagami M."/>
            <person name="Waki K."/>
            <person name="Watahiki A."/>
            <person name="Okamura-Oho Y."/>
            <person name="Suzuki H."/>
            <person name="Kawai J."/>
            <person name="Hayashizaki Y."/>
        </authorList>
    </citation>
    <scope>NUCLEOTIDE SEQUENCE [LARGE SCALE MRNA] OF 353-547</scope>
    <source>
        <strain>C57BL/6J</strain>
        <tissue>Cerebellum</tissue>
    </source>
</reference>
<reference key="5">
    <citation type="journal article" date="2010" name="Cell">
        <title>A tissue-specific atlas of mouse protein phosphorylation and expression.</title>
        <authorList>
            <person name="Huttlin E.L."/>
            <person name="Jedrychowski M.P."/>
            <person name="Elias J.E."/>
            <person name="Goswami T."/>
            <person name="Rad R."/>
            <person name="Beausoleil S.A."/>
            <person name="Villen J."/>
            <person name="Haas W."/>
            <person name="Sowa M.E."/>
            <person name="Gygi S.P."/>
        </authorList>
    </citation>
    <scope>PHOSPHORYLATION [LARGE SCALE ANALYSIS] AT THR-374; SER-399 AND SER-401</scope>
    <scope>IDENTIFICATION BY MASS SPECTROMETRY [LARGE SCALE ANALYSIS]</scope>
    <source>
        <tissue>Brain</tissue>
    </source>
</reference>
<reference key="6">
    <citation type="journal article" date="2015" name="J. Biol. Chem.">
        <title>Identification of a novel sequence motif recognized by the ankyrin repeat domain of zDHHC17/13 S-acyltransferases.</title>
        <authorList>
            <person name="Lemonidis K."/>
            <person name="Sanchez-Perez M.C."/>
            <person name="Chamberlain L.H."/>
        </authorList>
    </citation>
    <scope>INTERACTION WITH ZDHHC17 AND ZDHHC13</scope>
</reference>
<reference key="7">
    <citation type="submission" date="2009-02" db="PDB data bank">
        <title>Solution structure of the 2nd CAP-Gly domain in mouse CLIP170-related 59kDA protein CLIPR-59.</title>
        <authorList>
            <consortium name="RIKEN structural genomics initiative (RSGI)"/>
        </authorList>
    </citation>
    <scope>STRUCTURE BY NMR OF 398-486</scope>
</reference>
<feature type="chain" id="PRO_0000415670" description="CAP-Gly domain-containing linker protein 3">
    <location>
        <begin position="1"/>
        <end position="547"/>
    </location>
</feature>
<feature type="repeat" description="ANK 1">
    <location>
        <begin position="117"/>
        <end position="158"/>
    </location>
</feature>
<feature type="repeat" description="ANK 2">
    <location>
        <begin position="160"/>
        <end position="191"/>
    </location>
</feature>
<feature type="repeat" description="ANK 3">
    <location>
        <begin position="197"/>
        <end position="229"/>
    </location>
</feature>
<feature type="domain" description="CAP-Gly 1" evidence="3">
    <location>
        <begin position="314"/>
        <end position="356"/>
    </location>
</feature>
<feature type="domain" description="CAP-Gly 2" evidence="3">
    <location>
        <begin position="436"/>
        <end position="478"/>
    </location>
</feature>
<feature type="region of interest" description="Disordered" evidence="4">
    <location>
        <begin position="1"/>
        <end position="49"/>
    </location>
</feature>
<feature type="region of interest" description="Disordered" evidence="4">
    <location>
        <begin position="365"/>
        <end position="413"/>
    </location>
</feature>
<feature type="region of interest" description="GoLD">
    <location>
        <begin position="488"/>
        <end position="547"/>
    </location>
</feature>
<feature type="compositionally biased region" description="Acidic residues" evidence="4">
    <location>
        <begin position="16"/>
        <end position="27"/>
    </location>
</feature>
<feature type="compositionally biased region" description="Low complexity" evidence="4">
    <location>
        <begin position="367"/>
        <end position="377"/>
    </location>
</feature>
<feature type="compositionally biased region" description="Basic residues" evidence="4">
    <location>
        <begin position="387"/>
        <end position="399"/>
    </location>
</feature>
<feature type="modified residue" description="Phosphothreonine" evidence="7">
    <location>
        <position position="374"/>
    </location>
</feature>
<feature type="modified residue" description="Phosphoserine" evidence="7">
    <location>
        <position position="399"/>
    </location>
</feature>
<feature type="modified residue" description="Phosphoserine" evidence="7">
    <location>
        <position position="401"/>
    </location>
</feature>
<feature type="lipid moiety-binding region" description="S-palmitoyl cysteine" evidence="1">
    <location>
        <position position="534"/>
    </location>
</feature>
<feature type="lipid moiety-binding region" description="S-palmitoyl cysteine" evidence="1">
    <location>
        <position position="535"/>
    </location>
</feature>
<feature type="strand" evidence="8">
    <location>
        <begin position="406"/>
        <end position="409"/>
    </location>
</feature>
<feature type="strand" evidence="8">
    <location>
        <begin position="420"/>
        <end position="424"/>
    </location>
</feature>
<feature type="turn" evidence="8">
    <location>
        <begin position="425"/>
        <end position="427"/>
    </location>
</feature>
<feature type="strand" evidence="8">
    <location>
        <begin position="428"/>
        <end position="437"/>
    </location>
</feature>
<feature type="strand" evidence="8">
    <location>
        <begin position="439"/>
        <end position="449"/>
    </location>
</feature>
<feature type="strand" evidence="8">
    <location>
        <begin position="451"/>
        <end position="453"/>
    </location>
</feature>
<feature type="strand" evidence="8">
    <location>
        <begin position="456"/>
        <end position="461"/>
    </location>
</feature>
<feature type="turn" evidence="8">
    <location>
        <begin position="471"/>
        <end position="473"/>
    </location>
</feature>
<feature type="strand" evidence="8">
    <location>
        <begin position="474"/>
        <end position="477"/>
    </location>
</feature>
<feature type="helix" evidence="8">
    <location>
        <begin position="479"/>
        <end position="481"/>
    </location>
</feature>
<feature type="strand" evidence="8">
    <location>
        <begin position="482"/>
        <end position="484"/>
    </location>
</feature>
<accession>B9EHT4</accession>
<accession>Q7TNI1</accession>
<accession>Q9DB67</accession>
<name>CLIP3_MOUSE</name>
<sequence length="547" mass="59587">MTKTDPAPMAPPPRGEEEEEEEEDEPVPEAPSPTQERRQKPVVHPSAPAPLPKDYAFTFFDPNDPACQEILFDPKTTIPELFAIVRQWVPQVQHKIDVIGNEILRRGCHVNDRDGLTDMTLLHYACKAGAHGVGDPAAAVRLSQQLLALGADVTLRSRWTNMNALHYAAYFDVPDLVRVLLKGARPRVVNSTCSDFNHGSALHIAASNLCLGAAKCLLEHGANPALRNRKGQVPAEVVPDPMDMSLDKAEAALVAKELRTLLEEAVPLSCTLPKVTLPNYDNVPGNLMLSALGLRLGDRVLLDGQKTGTLRFCGTTEFASGQWVGVELDEPEGKNDGSVGGVRYFICPPKQGLFASVSKVSKAVDAPPSSVTSTPRTPRMDFSRVTGKGRREHKGKKKSPSSPSLGSLQQREGAKAEVGDQVLVAGQKQGIVRFYGKTDFAPGYWYGIELDQPTGKHDGSVFGVRYFTCAPRHGVFAPASRIQRIGGSTDPPGDSVGAKKVHQVTMTQPKRTFTTVRTPKDIASENSISRLLFCCWFPWMLRAEMQS</sequence>
<protein>
    <recommendedName>
        <fullName>CAP-Gly domain-containing linker protein 3</fullName>
    </recommendedName>
    <alternativeName>
        <fullName>Cytoplasmic linker protein 170-related 59 kDa protein</fullName>
        <shortName>CLIP-170-related 59 kDa protein</shortName>
        <shortName>CLIPR-59</shortName>
    </alternativeName>
</protein>